<sequence>MVHLRRSLAPYWWPIPRKAGGVWVVKPSPGPHSFAYSLPLAIVIRDVLRYAKTLREARYIVSRGYIKVDGVVRKDYRFPVGLMDVIEIVPTGEVYRVVPDQDRYYNLLPIPSSEASLKLLRVEGKTTVNGGRLQLHFHDGRNLITSPDMGAKIKTFDTILYDLENKTIKTHIPMKLGVVAVVTHGSNVGFSGKLYEIVWTLKRRQSVVGLKKGEEVRRTILDYIMAVGEESPVIKITP</sequence>
<dbReference type="EMBL" id="CP000660">
    <property type="protein sequence ID" value="ABP51281.1"/>
    <property type="molecule type" value="Genomic_DNA"/>
</dbReference>
<dbReference type="SMR" id="A4WLL4"/>
<dbReference type="STRING" id="340102.Pars_1730"/>
<dbReference type="KEGG" id="pas:Pars_1730"/>
<dbReference type="HOGENOM" id="CLU_060400_0_0_2"/>
<dbReference type="OrthoDB" id="372073at2157"/>
<dbReference type="PhylomeDB" id="A4WLL4"/>
<dbReference type="Proteomes" id="UP000001567">
    <property type="component" value="Chromosome"/>
</dbReference>
<dbReference type="GO" id="GO:0022627">
    <property type="term" value="C:cytosolic small ribosomal subunit"/>
    <property type="evidence" value="ECO:0007669"/>
    <property type="project" value="TreeGrafter"/>
</dbReference>
<dbReference type="GO" id="GO:0019843">
    <property type="term" value="F:rRNA binding"/>
    <property type="evidence" value="ECO:0007669"/>
    <property type="project" value="UniProtKB-KW"/>
</dbReference>
<dbReference type="GO" id="GO:0003735">
    <property type="term" value="F:structural constituent of ribosome"/>
    <property type="evidence" value="ECO:0007669"/>
    <property type="project" value="InterPro"/>
</dbReference>
<dbReference type="GO" id="GO:0006412">
    <property type="term" value="P:translation"/>
    <property type="evidence" value="ECO:0007669"/>
    <property type="project" value="UniProtKB-UniRule"/>
</dbReference>
<dbReference type="CDD" id="cd00165">
    <property type="entry name" value="S4"/>
    <property type="match status" value="1"/>
</dbReference>
<dbReference type="FunFam" id="3.10.290.10:FF:000002">
    <property type="entry name" value="40S ribosomal protein S4"/>
    <property type="match status" value="1"/>
</dbReference>
<dbReference type="Gene3D" id="2.30.30.30">
    <property type="match status" value="1"/>
</dbReference>
<dbReference type="Gene3D" id="2.40.50.740">
    <property type="match status" value="1"/>
</dbReference>
<dbReference type="Gene3D" id="3.10.290.10">
    <property type="entry name" value="RNA-binding S4 domain"/>
    <property type="match status" value="1"/>
</dbReference>
<dbReference type="HAMAP" id="MF_00485">
    <property type="entry name" value="Ribosomal_eS4"/>
    <property type="match status" value="1"/>
</dbReference>
<dbReference type="InterPro" id="IPR014722">
    <property type="entry name" value="Rib_uL2_dom2"/>
</dbReference>
<dbReference type="InterPro" id="IPR000876">
    <property type="entry name" value="Ribosomal_eS4"/>
</dbReference>
<dbReference type="InterPro" id="IPR013845">
    <property type="entry name" value="Ribosomal_eS4_central_region"/>
</dbReference>
<dbReference type="InterPro" id="IPR038237">
    <property type="entry name" value="Ribosomal_eS4_central_sf"/>
</dbReference>
<dbReference type="InterPro" id="IPR013843">
    <property type="entry name" value="Ribosomal_eS4_N"/>
</dbReference>
<dbReference type="InterPro" id="IPR002942">
    <property type="entry name" value="S4_RNA-bd"/>
</dbReference>
<dbReference type="InterPro" id="IPR036986">
    <property type="entry name" value="S4_RNA-bd_sf"/>
</dbReference>
<dbReference type="NCBIfam" id="NF003312">
    <property type="entry name" value="PRK04313.1"/>
    <property type="match status" value="1"/>
</dbReference>
<dbReference type="PANTHER" id="PTHR11581">
    <property type="entry name" value="30S/40S RIBOSOMAL PROTEIN S4"/>
    <property type="match status" value="1"/>
</dbReference>
<dbReference type="PANTHER" id="PTHR11581:SF0">
    <property type="entry name" value="SMALL RIBOSOMAL SUBUNIT PROTEIN ES4"/>
    <property type="match status" value="1"/>
</dbReference>
<dbReference type="Pfam" id="PF00900">
    <property type="entry name" value="Ribosomal_S4e"/>
    <property type="match status" value="1"/>
</dbReference>
<dbReference type="Pfam" id="PF08071">
    <property type="entry name" value="RS4NT"/>
    <property type="match status" value="1"/>
</dbReference>
<dbReference type="Pfam" id="PF01479">
    <property type="entry name" value="S4"/>
    <property type="match status" value="1"/>
</dbReference>
<dbReference type="PIRSF" id="PIRSF002116">
    <property type="entry name" value="Ribosomal_S4"/>
    <property type="match status" value="1"/>
</dbReference>
<dbReference type="SMART" id="SM00363">
    <property type="entry name" value="S4"/>
    <property type="match status" value="1"/>
</dbReference>
<dbReference type="SUPFAM" id="SSF55174">
    <property type="entry name" value="Alpha-L RNA-binding motif"/>
    <property type="match status" value="1"/>
</dbReference>
<dbReference type="PROSITE" id="PS50889">
    <property type="entry name" value="S4"/>
    <property type="match status" value="1"/>
</dbReference>
<keyword id="KW-0687">Ribonucleoprotein</keyword>
<keyword id="KW-0689">Ribosomal protein</keyword>
<keyword id="KW-0694">RNA-binding</keyword>
<keyword id="KW-0699">rRNA-binding</keyword>
<gene>
    <name evidence="1" type="primary">rps4e</name>
    <name type="ordered locus">Pars_1730</name>
</gene>
<name>RS4E_PYRAR</name>
<organism>
    <name type="scientific">Pyrobaculum arsenaticum (strain DSM 13514 / JCM 11321 / PZ6)</name>
    <dbReference type="NCBI Taxonomy" id="340102"/>
    <lineage>
        <taxon>Archaea</taxon>
        <taxon>Thermoproteota</taxon>
        <taxon>Thermoprotei</taxon>
        <taxon>Thermoproteales</taxon>
        <taxon>Thermoproteaceae</taxon>
        <taxon>Pyrobaculum</taxon>
    </lineage>
</organism>
<feature type="chain" id="PRO_1000081346" description="Small ribosomal subunit protein eS4">
    <location>
        <begin position="1"/>
        <end position="238"/>
    </location>
</feature>
<feature type="domain" description="S4 RNA-binding" evidence="1">
    <location>
        <begin position="38"/>
        <end position="100"/>
    </location>
</feature>
<reference key="1">
    <citation type="submission" date="2007-04" db="EMBL/GenBank/DDBJ databases">
        <title>Complete sequence of Pyrobaculum arsenaticum DSM 13514.</title>
        <authorList>
            <consortium name="US DOE Joint Genome Institute"/>
            <person name="Copeland A."/>
            <person name="Lucas S."/>
            <person name="Lapidus A."/>
            <person name="Barry K."/>
            <person name="Glavina del Rio T."/>
            <person name="Dalin E."/>
            <person name="Tice H."/>
            <person name="Pitluck S."/>
            <person name="Chain P."/>
            <person name="Malfatti S."/>
            <person name="Shin M."/>
            <person name="Vergez L."/>
            <person name="Schmutz J."/>
            <person name="Larimer F."/>
            <person name="Land M."/>
            <person name="Hauser L."/>
            <person name="Kyrpides N."/>
            <person name="Mikhailova N."/>
            <person name="Cozen A.E."/>
            <person name="Fitz-Gibbon S.T."/>
            <person name="House C.H."/>
            <person name="Saltikov C."/>
            <person name="Lowe T.M."/>
            <person name="Richardson P."/>
        </authorList>
    </citation>
    <scope>NUCLEOTIDE SEQUENCE [LARGE SCALE GENOMIC DNA]</scope>
    <source>
        <strain>ATCC 700994 / DSM 13514 / JCM 11321 / PZ6</strain>
    </source>
</reference>
<accession>A4WLL4</accession>
<protein>
    <recommendedName>
        <fullName evidence="1">Small ribosomal subunit protein eS4</fullName>
    </recommendedName>
    <alternativeName>
        <fullName evidence="2">30S ribosomal protein S4e</fullName>
    </alternativeName>
</protein>
<proteinExistence type="inferred from homology"/>
<evidence type="ECO:0000255" key="1">
    <source>
        <dbReference type="HAMAP-Rule" id="MF_00485"/>
    </source>
</evidence>
<evidence type="ECO:0000305" key="2"/>
<comment type="similarity">
    <text evidence="1">Belongs to the eukaryotic ribosomal protein eS4 family.</text>
</comment>